<reference key="1">
    <citation type="journal article" date="2001" name="Science">
        <title>Mechanisms of evolution in Rickettsia conorii and R. prowazekii.</title>
        <authorList>
            <person name="Ogata H."/>
            <person name="Audic S."/>
            <person name="Renesto-Audiffren P."/>
            <person name="Fournier P.-E."/>
            <person name="Barbe V."/>
            <person name="Samson D."/>
            <person name="Roux V."/>
            <person name="Cossart P."/>
            <person name="Weissenbach J."/>
            <person name="Claverie J.-M."/>
            <person name="Raoult D."/>
        </authorList>
    </citation>
    <scope>NUCLEOTIDE SEQUENCE [LARGE SCALE GENOMIC DNA]</scope>
    <source>
        <strain>ATCC VR-613 / Malish 7</strain>
    </source>
</reference>
<feature type="chain" id="PRO_0000203999" description="UPF0246 protein RC0754">
    <location>
        <begin position="1"/>
        <end position="248"/>
    </location>
</feature>
<organism>
    <name type="scientific">Rickettsia conorii (strain ATCC VR-613 / Malish 7)</name>
    <dbReference type="NCBI Taxonomy" id="272944"/>
    <lineage>
        <taxon>Bacteria</taxon>
        <taxon>Pseudomonadati</taxon>
        <taxon>Pseudomonadota</taxon>
        <taxon>Alphaproteobacteria</taxon>
        <taxon>Rickettsiales</taxon>
        <taxon>Rickettsiaceae</taxon>
        <taxon>Rickettsieae</taxon>
        <taxon>Rickettsia</taxon>
        <taxon>spotted fever group</taxon>
    </lineage>
</organism>
<sequence>MLAIISSAKTLNFEKLAPKTELTIPMFLTLTNKLLSTLQSYSENQLSKIMNISAKLALINKERFKDFDNQESKAAIFTYAGDVFNNIHIEKLTNHALNFLQSHLLIISGLYGVLKPLDTIKPYRLEMATKLNEINLTNFWQDEVTNYINKILAKQENKYLLNLASQEYSSVINPNKLKYQLVNVHFKENRNGKLSRIGINAKKARGAMVKVIANNLIDSPELLKNFSYLGYAFSTKHSSDNELVFIKS</sequence>
<evidence type="ECO:0000255" key="1">
    <source>
        <dbReference type="HAMAP-Rule" id="MF_00652"/>
    </source>
</evidence>
<gene>
    <name type="ordered locus">RC0754</name>
</gene>
<accession>Q92HL7</accession>
<protein>
    <recommendedName>
        <fullName evidence="1">UPF0246 protein RC0754</fullName>
    </recommendedName>
</protein>
<proteinExistence type="inferred from homology"/>
<dbReference type="EMBL" id="AE006914">
    <property type="protein sequence ID" value="AAL03292.1"/>
    <property type="molecule type" value="Genomic_DNA"/>
</dbReference>
<dbReference type="PIR" id="B97794">
    <property type="entry name" value="B97794"/>
</dbReference>
<dbReference type="RefSeq" id="WP_010977372.1">
    <property type="nucleotide sequence ID" value="NC_003103.1"/>
</dbReference>
<dbReference type="SMR" id="Q92HL7"/>
<dbReference type="GeneID" id="927492"/>
<dbReference type="KEGG" id="rco:RC0754"/>
<dbReference type="PATRIC" id="fig|272944.4.peg.858"/>
<dbReference type="HOGENOM" id="CLU_061989_0_0_5"/>
<dbReference type="Proteomes" id="UP000000816">
    <property type="component" value="Chromosome"/>
</dbReference>
<dbReference type="GO" id="GO:0005829">
    <property type="term" value="C:cytosol"/>
    <property type="evidence" value="ECO:0007669"/>
    <property type="project" value="TreeGrafter"/>
</dbReference>
<dbReference type="GO" id="GO:0033194">
    <property type="term" value="P:response to hydroperoxide"/>
    <property type="evidence" value="ECO:0007669"/>
    <property type="project" value="TreeGrafter"/>
</dbReference>
<dbReference type="HAMAP" id="MF_00652">
    <property type="entry name" value="UPF0246"/>
    <property type="match status" value="1"/>
</dbReference>
<dbReference type="InterPro" id="IPR005583">
    <property type="entry name" value="YaaA"/>
</dbReference>
<dbReference type="PANTHER" id="PTHR30283:SF4">
    <property type="entry name" value="PEROXIDE STRESS RESISTANCE PROTEIN YAAA"/>
    <property type="match status" value="1"/>
</dbReference>
<dbReference type="PANTHER" id="PTHR30283">
    <property type="entry name" value="PEROXIDE STRESS RESPONSE PROTEIN YAAA"/>
    <property type="match status" value="1"/>
</dbReference>
<dbReference type="Pfam" id="PF03883">
    <property type="entry name" value="H2O2_YaaD"/>
    <property type="match status" value="1"/>
</dbReference>
<name>Y754_RICCN</name>
<comment type="similarity">
    <text evidence="1">Belongs to the UPF0246 family.</text>
</comment>